<organism>
    <name type="scientific">Roseiflexus castenholzii (strain DSM 13941 / HLO8)</name>
    <dbReference type="NCBI Taxonomy" id="383372"/>
    <lineage>
        <taxon>Bacteria</taxon>
        <taxon>Bacillati</taxon>
        <taxon>Chloroflexota</taxon>
        <taxon>Chloroflexia</taxon>
        <taxon>Chloroflexales</taxon>
        <taxon>Roseiflexineae</taxon>
        <taxon>Roseiflexaceae</taxon>
        <taxon>Roseiflexus</taxon>
    </lineage>
</organism>
<sequence>MTAMILDGRALAKTLREELRADIQAFVQTTGVTPSLAVVKIAGDPASERYTRTIRKGCEDIGIVFYDHTLPPDTTQAALEETLHALSFDRAVNGILLHLPLPPGFDSNRAIAQIDPHKDVDGVHPYNAGLLAMGQPTMVPNTPAGGMELLLRNHILIKGQRATVVGRSVVVGKPMALLLLQEHATVTIAHSRTKDLASVVREADIVVAATGKPGLITADMVRPGAVVVDFGVNVLGDGKVVGDVDFAGVAEIASAITPVPGGTGPVTNIMLLRNVLRAARLQGVGRGE</sequence>
<gene>
    <name evidence="1" type="primary">folD</name>
    <name type="ordered locus">Rcas_0735</name>
</gene>
<evidence type="ECO:0000255" key="1">
    <source>
        <dbReference type="HAMAP-Rule" id="MF_01576"/>
    </source>
</evidence>
<feature type="chain" id="PRO_1000087914" description="Bifunctional protein FolD">
    <location>
        <begin position="1"/>
        <end position="288"/>
    </location>
</feature>
<feature type="binding site" evidence="1">
    <location>
        <begin position="166"/>
        <end position="168"/>
    </location>
    <ligand>
        <name>NADP(+)</name>
        <dbReference type="ChEBI" id="CHEBI:58349"/>
    </ligand>
</feature>
<feature type="binding site" evidence="1">
    <location>
        <position position="191"/>
    </location>
    <ligand>
        <name>NADP(+)</name>
        <dbReference type="ChEBI" id="CHEBI:58349"/>
    </ligand>
</feature>
<feature type="binding site" evidence="1">
    <location>
        <position position="232"/>
    </location>
    <ligand>
        <name>NADP(+)</name>
        <dbReference type="ChEBI" id="CHEBI:58349"/>
    </ligand>
</feature>
<accession>A7NHA9</accession>
<keyword id="KW-0028">Amino-acid biosynthesis</keyword>
<keyword id="KW-0368">Histidine biosynthesis</keyword>
<keyword id="KW-0378">Hydrolase</keyword>
<keyword id="KW-0486">Methionine biosynthesis</keyword>
<keyword id="KW-0511">Multifunctional enzyme</keyword>
<keyword id="KW-0521">NADP</keyword>
<keyword id="KW-0554">One-carbon metabolism</keyword>
<keyword id="KW-0560">Oxidoreductase</keyword>
<keyword id="KW-0658">Purine biosynthesis</keyword>
<keyword id="KW-1185">Reference proteome</keyword>
<protein>
    <recommendedName>
        <fullName evidence="1">Bifunctional protein FolD</fullName>
    </recommendedName>
    <domain>
        <recommendedName>
            <fullName evidence="1">Methylenetetrahydrofolate dehydrogenase</fullName>
            <ecNumber evidence="1">1.5.1.5</ecNumber>
        </recommendedName>
    </domain>
    <domain>
        <recommendedName>
            <fullName evidence="1">Methenyltetrahydrofolate cyclohydrolase</fullName>
            <ecNumber evidence="1">3.5.4.9</ecNumber>
        </recommendedName>
    </domain>
</protein>
<name>FOLD_ROSCS</name>
<proteinExistence type="inferred from homology"/>
<reference key="1">
    <citation type="submission" date="2007-08" db="EMBL/GenBank/DDBJ databases">
        <title>Complete sequence of Roseiflexus castenholzii DSM 13941.</title>
        <authorList>
            <consortium name="US DOE Joint Genome Institute"/>
            <person name="Copeland A."/>
            <person name="Lucas S."/>
            <person name="Lapidus A."/>
            <person name="Barry K."/>
            <person name="Glavina del Rio T."/>
            <person name="Dalin E."/>
            <person name="Tice H."/>
            <person name="Pitluck S."/>
            <person name="Thompson L.S."/>
            <person name="Brettin T."/>
            <person name="Bruce D."/>
            <person name="Detter J.C."/>
            <person name="Han C."/>
            <person name="Tapia R."/>
            <person name="Schmutz J."/>
            <person name="Larimer F."/>
            <person name="Land M."/>
            <person name="Hauser L."/>
            <person name="Kyrpides N."/>
            <person name="Mikhailova N."/>
            <person name="Bryant D.A."/>
            <person name="Hanada S."/>
            <person name="Tsukatani Y."/>
            <person name="Richardson P."/>
        </authorList>
    </citation>
    <scope>NUCLEOTIDE SEQUENCE [LARGE SCALE GENOMIC DNA]</scope>
    <source>
        <strain>DSM 13941 / HLO8</strain>
    </source>
</reference>
<dbReference type="EC" id="1.5.1.5" evidence="1"/>
<dbReference type="EC" id="3.5.4.9" evidence="1"/>
<dbReference type="EMBL" id="CP000804">
    <property type="protein sequence ID" value="ABU56856.1"/>
    <property type="molecule type" value="Genomic_DNA"/>
</dbReference>
<dbReference type="RefSeq" id="WP_012119286.1">
    <property type="nucleotide sequence ID" value="NC_009767.1"/>
</dbReference>
<dbReference type="SMR" id="A7NHA9"/>
<dbReference type="STRING" id="383372.Rcas_0735"/>
<dbReference type="KEGG" id="rca:Rcas_0735"/>
<dbReference type="eggNOG" id="COG0190">
    <property type="taxonomic scope" value="Bacteria"/>
</dbReference>
<dbReference type="HOGENOM" id="CLU_034045_2_1_0"/>
<dbReference type="OrthoDB" id="9803580at2"/>
<dbReference type="UniPathway" id="UPA00193"/>
<dbReference type="Proteomes" id="UP000000263">
    <property type="component" value="Chromosome"/>
</dbReference>
<dbReference type="GO" id="GO:0005829">
    <property type="term" value="C:cytosol"/>
    <property type="evidence" value="ECO:0007669"/>
    <property type="project" value="TreeGrafter"/>
</dbReference>
<dbReference type="GO" id="GO:0004477">
    <property type="term" value="F:methenyltetrahydrofolate cyclohydrolase activity"/>
    <property type="evidence" value="ECO:0007669"/>
    <property type="project" value="UniProtKB-UniRule"/>
</dbReference>
<dbReference type="GO" id="GO:0004488">
    <property type="term" value="F:methylenetetrahydrofolate dehydrogenase (NADP+) activity"/>
    <property type="evidence" value="ECO:0007669"/>
    <property type="project" value="UniProtKB-UniRule"/>
</dbReference>
<dbReference type="GO" id="GO:0000105">
    <property type="term" value="P:L-histidine biosynthetic process"/>
    <property type="evidence" value="ECO:0007669"/>
    <property type="project" value="UniProtKB-KW"/>
</dbReference>
<dbReference type="GO" id="GO:0009086">
    <property type="term" value="P:methionine biosynthetic process"/>
    <property type="evidence" value="ECO:0007669"/>
    <property type="project" value="UniProtKB-KW"/>
</dbReference>
<dbReference type="GO" id="GO:0006164">
    <property type="term" value="P:purine nucleotide biosynthetic process"/>
    <property type="evidence" value="ECO:0007669"/>
    <property type="project" value="UniProtKB-KW"/>
</dbReference>
<dbReference type="GO" id="GO:0035999">
    <property type="term" value="P:tetrahydrofolate interconversion"/>
    <property type="evidence" value="ECO:0007669"/>
    <property type="project" value="UniProtKB-UniRule"/>
</dbReference>
<dbReference type="CDD" id="cd01080">
    <property type="entry name" value="NAD_bind_m-THF_DH_Cyclohyd"/>
    <property type="match status" value="1"/>
</dbReference>
<dbReference type="FunFam" id="3.40.50.720:FF:000094">
    <property type="entry name" value="Bifunctional protein FolD"/>
    <property type="match status" value="1"/>
</dbReference>
<dbReference type="Gene3D" id="3.40.50.10860">
    <property type="entry name" value="Leucine Dehydrogenase, chain A, domain 1"/>
    <property type="match status" value="1"/>
</dbReference>
<dbReference type="Gene3D" id="3.40.50.720">
    <property type="entry name" value="NAD(P)-binding Rossmann-like Domain"/>
    <property type="match status" value="1"/>
</dbReference>
<dbReference type="HAMAP" id="MF_01576">
    <property type="entry name" value="THF_DHG_CYH"/>
    <property type="match status" value="1"/>
</dbReference>
<dbReference type="InterPro" id="IPR046346">
    <property type="entry name" value="Aminoacid_DH-like_N_sf"/>
</dbReference>
<dbReference type="InterPro" id="IPR036291">
    <property type="entry name" value="NAD(P)-bd_dom_sf"/>
</dbReference>
<dbReference type="InterPro" id="IPR000672">
    <property type="entry name" value="THF_DH/CycHdrlase"/>
</dbReference>
<dbReference type="InterPro" id="IPR020630">
    <property type="entry name" value="THF_DH/CycHdrlase_cat_dom"/>
</dbReference>
<dbReference type="InterPro" id="IPR020631">
    <property type="entry name" value="THF_DH/CycHdrlase_NAD-bd_dom"/>
</dbReference>
<dbReference type="PANTHER" id="PTHR48099:SF5">
    <property type="entry name" value="C-1-TETRAHYDROFOLATE SYNTHASE, CYTOPLASMIC"/>
    <property type="match status" value="1"/>
</dbReference>
<dbReference type="PANTHER" id="PTHR48099">
    <property type="entry name" value="C-1-TETRAHYDROFOLATE SYNTHASE, CYTOPLASMIC-RELATED"/>
    <property type="match status" value="1"/>
</dbReference>
<dbReference type="Pfam" id="PF00763">
    <property type="entry name" value="THF_DHG_CYH"/>
    <property type="match status" value="1"/>
</dbReference>
<dbReference type="Pfam" id="PF02882">
    <property type="entry name" value="THF_DHG_CYH_C"/>
    <property type="match status" value="1"/>
</dbReference>
<dbReference type="PRINTS" id="PR00085">
    <property type="entry name" value="THFDHDRGNASE"/>
</dbReference>
<dbReference type="SUPFAM" id="SSF53223">
    <property type="entry name" value="Aminoacid dehydrogenase-like, N-terminal domain"/>
    <property type="match status" value="1"/>
</dbReference>
<dbReference type="SUPFAM" id="SSF51735">
    <property type="entry name" value="NAD(P)-binding Rossmann-fold domains"/>
    <property type="match status" value="1"/>
</dbReference>
<comment type="function">
    <text evidence="1">Catalyzes the oxidation of 5,10-methylenetetrahydrofolate to 5,10-methenyltetrahydrofolate and then the hydrolysis of 5,10-methenyltetrahydrofolate to 10-formyltetrahydrofolate.</text>
</comment>
<comment type="catalytic activity">
    <reaction evidence="1">
        <text>(6R)-5,10-methylene-5,6,7,8-tetrahydrofolate + NADP(+) = (6R)-5,10-methenyltetrahydrofolate + NADPH</text>
        <dbReference type="Rhea" id="RHEA:22812"/>
        <dbReference type="ChEBI" id="CHEBI:15636"/>
        <dbReference type="ChEBI" id="CHEBI:57455"/>
        <dbReference type="ChEBI" id="CHEBI:57783"/>
        <dbReference type="ChEBI" id="CHEBI:58349"/>
        <dbReference type="EC" id="1.5.1.5"/>
    </reaction>
</comment>
<comment type="catalytic activity">
    <reaction evidence="1">
        <text>(6R)-5,10-methenyltetrahydrofolate + H2O = (6R)-10-formyltetrahydrofolate + H(+)</text>
        <dbReference type="Rhea" id="RHEA:23700"/>
        <dbReference type="ChEBI" id="CHEBI:15377"/>
        <dbReference type="ChEBI" id="CHEBI:15378"/>
        <dbReference type="ChEBI" id="CHEBI:57455"/>
        <dbReference type="ChEBI" id="CHEBI:195366"/>
        <dbReference type="EC" id="3.5.4.9"/>
    </reaction>
</comment>
<comment type="pathway">
    <text evidence="1">One-carbon metabolism; tetrahydrofolate interconversion.</text>
</comment>
<comment type="subunit">
    <text evidence="1">Homodimer.</text>
</comment>
<comment type="similarity">
    <text evidence="1">Belongs to the tetrahydrofolate dehydrogenase/cyclohydrolase family.</text>
</comment>